<dbReference type="EC" id="2.5.1.61" evidence="1"/>
<dbReference type="EMBL" id="CP001072">
    <property type="protein sequence ID" value="ACD47701.1"/>
    <property type="molecule type" value="Genomic_DNA"/>
</dbReference>
<dbReference type="RefSeq" id="WP_000527618.1">
    <property type="nucleotide sequence ID" value="NC_010698.2"/>
</dbReference>
<dbReference type="SMR" id="B2US69"/>
<dbReference type="KEGG" id="hps:HPSH_01235"/>
<dbReference type="HOGENOM" id="CLU_019704_0_2_7"/>
<dbReference type="UniPathway" id="UPA00251">
    <property type="reaction ID" value="UER00319"/>
</dbReference>
<dbReference type="GO" id="GO:0005737">
    <property type="term" value="C:cytoplasm"/>
    <property type="evidence" value="ECO:0007669"/>
    <property type="project" value="TreeGrafter"/>
</dbReference>
<dbReference type="GO" id="GO:0004418">
    <property type="term" value="F:hydroxymethylbilane synthase activity"/>
    <property type="evidence" value="ECO:0007669"/>
    <property type="project" value="UniProtKB-UniRule"/>
</dbReference>
<dbReference type="GO" id="GO:0006782">
    <property type="term" value="P:protoporphyrinogen IX biosynthetic process"/>
    <property type="evidence" value="ECO:0007669"/>
    <property type="project" value="UniProtKB-UniRule"/>
</dbReference>
<dbReference type="CDD" id="cd13646">
    <property type="entry name" value="PBP2_EcHMBS_like"/>
    <property type="match status" value="1"/>
</dbReference>
<dbReference type="FunFam" id="3.40.190.10:FF:000004">
    <property type="entry name" value="Porphobilinogen deaminase"/>
    <property type="match status" value="1"/>
</dbReference>
<dbReference type="FunFam" id="3.40.190.10:FF:000005">
    <property type="entry name" value="Porphobilinogen deaminase"/>
    <property type="match status" value="1"/>
</dbReference>
<dbReference type="Gene3D" id="3.40.190.10">
    <property type="entry name" value="Periplasmic binding protein-like II"/>
    <property type="match status" value="2"/>
</dbReference>
<dbReference type="Gene3D" id="3.30.160.40">
    <property type="entry name" value="Porphobilinogen deaminase, C-terminal domain"/>
    <property type="match status" value="1"/>
</dbReference>
<dbReference type="HAMAP" id="MF_00260">
    <property type="entry name" value="Porphobil_deam"/>
    <property type="match status" value="1"/>
</dbReference>
<dbReference type="InterPro" id="IPR000860">
    <property type="entry name" value="HemC"/>
</dbReference>
<dbReference type="InterPro" id="IPR022419">
    <property type="entry name" value="Porphobilin_deaminase_cofac_BS"/>
</dbReference>
<dbReference type="InterPro" id="IPR022417">
    <property type="entry name" value="Porphobilin_deaminase_N"/>
</dbReference>
<dbReference type="InterPro" id="IPR022418">
    <property type="entry name" value="Porphobilinogen_deaminase_C"/>
</dbReference>
<dbReference type="InterPro" id="IPR036803">
    <property type="entry name" value="Porphobilinogen_deaminase_C_sf"/>
</dbReference>
<dbReference type="NCBIfam" id="TIGR00212">
    <property type="entry name" value="hemC"/>
    <property type="match status" value="1"/>
</dbReference>
<dbReference type="PANTHER" id="PTHR11557">
    <property type="entry name" value="PORPHOBILINOGEN DEAMINASE"/>
    <property type="match status" value="1"/>
</dbReference>
<dbReference type="PANTHER" id="PTHR11557:SF0">
    <property type="entry name" value="PORPHOBILINOGEN DEAMINASE"/>
    <property type="match status" value="1"/>
</dbReference>
<dbReference type="Pfam" id="PF01379">
    <property type="entry name" value="Porphobil_deam"/>
    <property type="match status" value="1"/>
</dbReference>
<dbReference type="Pfam" id="PF03900">
    <property type="entry name" value="Porphobil_deamC"/>
    <property type="match status" value="1"/>
</dbReference>
<dbReference type="PIRSF" id="PIRSF001438">
    <property type="entry name" value="4pyrrol_synth_OHMeBilane_synth"/>
    <property type="match status" value="1"/>
</dbReference>
<dbReference type="PRINTS" id="PR00151">
    <property type="entry name" value="PORPHBDMNASE"/>
</dbReference>
<dbReference type="SUPFAM" id="SSF53850">
    <property type="entry name" value="Periplasmic binding protein-like II"/>
    <property type="match status" value="1"/>
</dbReference>
<dbReference type="SUPFAM" id="SSF54782">
    <property type="entry name" value="Porphobilinogen deaminase (hydroxymethylbilane synthase), C-terminal domain"/>
    <property type="match status" value="1"/>
</dbReference>
<dbReference type="PROSITE" id="PS00533">
    <property type="entry name" value="PORPHOBILINOGEN_DEAM"/>
    <property type="match status" value="1"/>
</dbReference>
<keyword id="KW-0627">Porphyrin biosynthesis</keyword>
<keyword id="KW-0808">Transferase</keyword>
<proteinExistence type="inferred from homology"/>
<gene>
    <name evidence="1" type="primary">hemC</name>
    <name type="ordered locus">HPSH_01235</name>
</gene>
<evidence type="ECO:0000255" key="1">
    <source>
        <dbReference type="HAMAP-Rule" id="MF_00260"/>
    </source>
</evidence>
<comment type="function">
    <text evidence="1">Tetrapolymerization of the monopyrrole PBG into the hydroxymethylbilane pre-uroporphyrinogen in several discrete steps.</text>
</comment>
<comment type="catalytic activity">
    <reaction evidence="1">
        <text>4 porphobilinogen + H2O = hydroxymethylbilane + 4 NH4(+)</text>
        <dbReference type="Rhea" id="RHEA:13185"/>
        <dbReference type="ChEBI" id="CHEBI:15377"/>
        <dbReference type="ChEBI" id="CHEBI:28938"/>
        <dbReference type="ChEBI" id="CHEBI:57845"/>
        <dbReference type="ChEBI" id="CHEBI:58126"/>
        <dbReference type="EC" id="2.5.1.61"/>
    </reaction>
</comment>
<comment type="cofactor">
    <cofactor evidence="1">
        <name>dipyrromethane</name>
        <dbReference type="ChEBI" id="CHEBI:60342"/>
    </cofactor>
    <text evidence="1">Binds 1 dipyrromethane group covalently.</text>
</comment>
<comment type="pathway">
    <text evidence="1">Porphyrin-containing compound metabolism; protoporphyrin-IX biosynthesis; coproporphyrinogen-III from 5-aminolevulinate: step 2/4.</text>
</comment>
<comment type="subunit">
    <text evidence="1">Monomer.</text>
</comment>
<comment type="miscellaneous">
    <text evidence="1">The porphobilinogen subunits are added to the dipyrromethane group.</text>
</comment>
<comment type="similarity">
    <text evidence="1">Belongs to the HMBS family.</text>
</comment>
<organism>
    <name type="scientific">Helicobacter pylori (strain Shi470)</name>
    <dbReference type="NCBI Taxonomy" id="512562"/>
    <lineage>
        <taxon>Bacteria</taxon>
        <taxon>Pseudomonadati</taxon>
        <taxon>Campylobacterota</taxon>
        <taxon>Epsilonproteobacteria</taxon>
        <taxon>Campylobacterales</taxon>
        <taxon>Helicobacteraceae</taxon>
        <taxon>Helicobacter</taxon>
    </lineage>
</organism>
<reference key="1">
    <citation type="submission" date="2008-05" db="EMBL/GenBank/DDBJ databases">
        <title>Genome sequence of Helicobacter pylori from the remote Amazon: traces of Asian ancestry of the first Americans.</title>
        <authorList>
            <person name="Kersulyte D."/>
            <person name="Kalia A."/>
            <person name="Gilman R.H."/>
            <person name="Berg D.E."/>
        </authorList>
    </citation>
    <scope>NUCLEOTIDE SEQUENCE [LARGE SCALE GENOMIC DNA]</scope>
    <source>
        <strain>Shi470</strain>
    </source>
</reference>
<accession>B2US69</accession>
<sequence length="306" mass="33823">MGNLVIGSRGSELALWQANHIKERLKKECSIESEIQIVKTKGDKILDTPLNKIGGKGLFTKELEELLLKGEIDLAVHSLKDVPVVFEKGLDLACITKRADVRDTFLSVKFPDLMSLPKGAKVGTTSLRRSMQLKLKRQDLDTESLRGNVQTRLKKLECGEFDAIILAEAGLCRLEIQGAKYRKAFSVEEMIPSMGQGALGVEMLKSHKHFATLQKLNDEESAFCCHLERAFVKGLNGGCQIPIGVHASLMGDRVKIRAVLGLPNGKEVIAKERQGDKTKAFDLVQELLEAFLQSGAKEILEKAQLF</sequence>
<protein>
    <recommendedName>
        <fullName evidence="1">Porphobilinogen deaminase</fullName>
        <shortName evidence="1">PBG</shortName>
        <ecNumber evidence="1">2.5.1.61</ecNumber>
    </recommendedName>
    <alternativeName>
        <fullName evidence="1">Hydroxymethylbilane synthase</fullName>
        <shortName evidence="1">HMBS</shortName>
    </alternativeName>
    <alternativeName>
        <fullName evidence="1">Pre-uroporphyrinogen synthase</fullName>
    </alternativeName>
</protein>
<feature type="chain" id="PRO_1000114159" description="Porphobilinogen deaminase">
    <location>
        <begin position="1"/>
        <end position="306"/>
    </location>
</feature>
<feature type="modified residue" description="S-(dipyrrolylmethanemethyl)cysteine" evidence="1">
    <location>
        <position position="239"/>
    </location>
</feature>
<name>HEM3_HELPS</name>